<sequence length="366" mass="40871">MVPEMSERQEFQASEFAYLLENSSYDYGENETYFCCTSPPCPQDFSLNFDRTFLPVLYSLLFVLGLLGNGVVAVVLLSQRAALSSTDTFLLHLAVADALLVLTLPLWAVDAAIQWVFGSGLCKVAGALFNINFYAGALLLACISFDRYLSIVHATQFYRRGPPARVALTCVAVWGLCLLFALPDFIFLSSHHDNRLNATHCQYNFPQEGRTALRVLQLVAGFLLPLLVMAYCYARILTVLLVSRGQRRLRAMRLVVVVVVAFALCWTPYHLVVLVDTLMDLGALARNCGRESRVDVAKSVTSGMGYMHCCLNPLLYAFVGVKFRERMWVLLMRLGCPDQRGHQRQPSASRRDSSWSETTEASYSGL</sequence>
<name>CXCR3_CAPHI</name>
<reference key="1">
    <citation type="journal article" date="2003" name="J. Biol. Chem.">
        <title>Regulation of blastocyst migration, apposition, and initial adhesion by a chemokine, interferon gamma-inducible protein 10 kDa (IP-10), during early gestation.</title>
        <authorList>
            <person name="Nagaoka K."/>
            <person name="Nojima H."/>
            <person name="Watanabe F."/>
            <person name="Chang K.-T."/>
            <person name="Christenson R.K."/>
            <person name="Sakai S."/>
            <person name="Imakawa K."/>
        </authorList>
    </citation>
    <scope>NUCLEOTIDE SEQUENCE [MRNA]</scope>
    <scope>FUNCTION</scope>
</reference>
<proteinExistence type="evidence at transcript level"/>
<evidence type="ECO:0000250" key="1"/>
<evidence type="ECO:0000250" key="2">
    <source>
        <dbReference type="UniProtKB" id="O88410"/>
    </source>
</evidence>
<evidence type="ECO:0000250" key="3">
    <source>
        <dbReference type="UniProtKB" id="P49682"/>
    </source>
</evidence>
<evidence type="ECO:0000255" key="4"/>
<evidence type="ECO:0000255" key="5">
    <source>
        <dbReference type="PROSITE-ProRule" id="PRU00521"/>
    </source>
</evidence>
<evidence type="ECO:0000256" key="6">
    <source>
        <dbReference type="SAM" id="MobiDB-lite"/>
    </source>
</evidence>
<evidence type="ECO:0000269" key="7">
    <source>
    </source>
</evidence>
<protein>
    <recommendedName>
        <fullName>C-X-C chemokine receptor type 3</fullName>
        <shortName>CXC-R3</shortName>
        <shortName>CXCR-3</shortName>
    </recommendedName>
    <alternativeName>
        <fullName>Interferon-inducible protein 10 receptor</fullName>
        <shortName>IP-10 receptor</shortName>
    </alternativeName>
    <cdAntigenName>CD183</cdAntigenName>
</protein>
<organism>
    <name type="scientific">Capra hircus</name>
    <name type="common">Goat</name>
    <dbReference type="NCBI Taxonomy" id="9925"/>
    <lineage>
        <taxon>Eukaryota</taxon>
        <taxon>Metazoa</taxon>
        <taxon>Chordata</taxon>
        <taxon>Craniata</taxon>
        <taxon>Vertebrata</taxon>
        <taxon>Euteleostomi</taxon>
        <taxon>Mammalia</taxon>
        <taxon>Eutheria</taxon>
        <taxon>Laurasiatheria</taxon>
        <taxon>Artiodactyla</taxon>
        <taxon>Ruminantia</taxon>
        <taxon>Pecora</taxon>
        <taxon>Bovidae</taxon>
        <taxon>Caprinae</taxon>
        <taxon>Capra</taxon>
    </lineage>
</organism>
<comment type="function">
    <text evidence="2 3 7">Receptor for the C-X-C chemokine CXCL9, CXCL10 and CXCL11 and mediates the proliferation, survival and angiogenic activity of mesangial cells through a heterotrimeric G-protein signaling pathway. Probably promotes cell chemotaxis response (By similarity). Binds to CCL21. Upon activation by PF4, induces activated T-lymphocytes migration mediated via downstream Ras/extracellular signal-regulated kinase (ERK) signaling (By similarity).</text>
</comment>
<comment type="subunit">
    <text evidence="3">Homomer. Forms heteromers with ACKR4 (By similarity). Interacts with PF4/CXCL4 (By similarity).</text>
</comment>
<comment type="subcellular location">
    <subcellularLocation>
        <location evidence="1">Cell membrane</location>
        <topology evidence="1">Multi-pass membrane protein</topology>
    </subcellularLocation>
</comment>
<comment type="PTM">
    <text evidence="1">Sulfation on Tyr-25 and Tyr-27 is essential for CXCL10 binding.</text>
</comment>
<comment type="PTM">
    <text evidence="1">N-glycosylated.</text>
</comment>
<comment type="similarity">
    <text evidence="5">Belongs to the G-protein coupled receptor 1 family.</text>
</comment>
<feature type="chain" id="PRO_0000069345" description="C-X-C chemokine receptor type 3">
    <location>
        <begin position="1"/>
        <end position="366"/>
    </location>
</feature>
<feature type="topological domain" description="Extracellular" evidence="4">
    <location>
        <begin position="1"/>
        <end position="55"/>
    </location>
</feature>
<feature type="transmembrane region" description="Helical; Name=1" evidence="4">
    <location>
        <begin position="56"/>
        <end position="76"/>
    </location>
</feature>
<feature type="topological domain" description="Cytoplasmic" evidence="4">
    <location>
        <begin position="77"/>
        <end position="88"/>
    </location>
</feature>
<feature type="transmembrane region" description="Helical; Name=2" evidence="4">
    <location>
        <begin position="89"/>
        <end position="109"/>
    </location>
</feature>
<feature type="topological domain" description="Extracellular" evidence="4">
    <location>
        <begin position="110"/>
        <end position="124"/>
    </location>
</feature>
<feature type="transmembrane region" description="Helical; Name=3" evidence="4">
    <location>
        <begin position="125"/>
        <end position="145"/>
    </location>
</feature>
<feature type="topological domain" description="Cytoplasmic" evidence="4">
    <location>
        <begin position="146"/>
        <end position="167"/>
    </location>
</feature>
<feature type="transmembrane region" description="Helical; Name=4" evidence="4">
    <location>
        <begin position="168"/>
        <end position="188"/>
    </location>
</feature>
<feature type="topological domain" description="Extracellular" evidence="4">
    <location>
        <begin position="189"/>
        <end position="221"/>
    </location>
</feature>
<feature type="transmembrane region" description="Helical; Name=5" evidence="4">
    <location>
        <begin position="222"/>
        <end position="242"/>
    </location>
</feature>
<feature type="topological domain" description="Cytoplasmic" evidence="4">
    <location>
        <begin position="243"/>
        <end position="254"/>
    </location>
</feature>
<feature type="transmembrane region" description="Helical; Name=6" evidence="4">
    <location>
        <begin position="255"/>
        <end position="275"/>
    </location>
</feature>
<feature type="topological domain" description="Extracellular" evidence="4">
    <location>
        <begin position="276"/>
        <end position="299"/>
    </location>
</feature>
<feature type="transmembrane region" description="Helical; Name=7" evidence="4">
    <location>
        <begin position="300"/>
        <end position="320"/>
    </location>
</feature>
<feature type="topological domain" description="Cytoplasmic" evidence="4">
    <location>
        <begin position="321"/>
        <end position="366"/>
    </location>
</feature>
<feature type="region of interest" description="Disordered" evidence="6">
    <location>
        <begin position="339"/>
        <end position="366"/>
    </location>
</feature>
<feature type="compositionally biased region" description="Polar residues" evidence="6">
    <location>
        <begin position="355"/>
        <end position="366"/>
    </location>
</feature>
<feature type="modified residue" description="Sulfotyrosine" evidence="1">
    <location>
        <position position="25"/>
    </location>
</feature>
<feature type="modified residue" description="Sulfotyrosine" evidence="1">
    <location>
        <position position="27"/>
    </location>
</feature>
<feature type="glycosylation site" description="N-linked (GlcNAc...) asparagine" evidence="4">
    <location>
        <position position="22"/>
    </location>
</feature>
<feature type="glycosylation site" description="N-linked (GlcNAc...) asparagine" evidence="4">
    <location>
        <position position="30"/>
    </location>
</feature>
<feature type="glycosylation site" description="N-linked (GlcNAc...) asparagine" evidence="4">
    <location>
        <position position="197"/>
    </location>
</feature>
<feature type="disulfide bond" evidence="5">
    <location>
        <begin position="122"/>
        <end position="201"/>
    </location>
</feature>
<gene>
    <name type="primary">CXCR3</name>
</gene>
<dbReference type="EMBL" id="AB099893">
    <property type="protein sequence ID" value="BAC55184.1"/>
    <property type="molecule type" value="mRNA"/>
</dbReference>
<dbReference type="RefSeq" id="NP_001272652.1">
    <property type="nucleotide sequence ID" value="NM_001285723.1"/>
</dbReference>
<dbReference type="SMR" id="Q867B2"/>
<dbReference type="STRING" id="9925.ENSCHIP00000013608"/>
<dbReference type="GlyCosmos" id="Q867B2">
    <property type="glycosylation" value="3 sites, No reported glycans"/>
</dbReference>
<dbReference type="Ensembl" id="ENSCHIT00000021389.1">
    <property type="protein sequence ID" value="ENSCHIP00000013597.1"/>
    <property type="gene ID" value="ENSCHIG00000014964.1"/>
</dbReference>
<dbReference type="Ensembl" id="ENSCHIT00020053067">
    <property type="protein sequence ID" value="ENSCHIP00020040593"/>
    <property type="gene ID" value="ENSCHIG00020025535"/>
</dbReference>
<dbReference type="GeneID" id="100860874"/>
<dbReference type="KEGG" id="chx:100860874"/>
<dbReference type="CTD" id="2833"/>
<dbReference type="GeneTree" id="ENSGT01050000244848"/>
<dbReference type="OrthoDB" id="9818824at2759"/>
<dbReference type="Proteomes" id="UP000291000">
    <property type="component" value="Unassembled WGS sequence"/>
</dbReference>
<dbReference type="Proteomes" id="UP000694566">
    <property type="component" value="Unplaced"/>
</dbReference>
<dbReference type="Bgee" id="ENSCHIG00000014964">
    <property type="expression patterns" value="Expressed in spleen and 5 other cell types or tissues"/>
</dbReference>
<dbReference type="GO" id="GO:0009897">
    <property type="term" value="C:external side of plasma membrane"/>
    <property type="evidence" value="ECO:0007669"/>
    <property type="project" value="TreeGrafter"/>
</dbReference>
<dbReference type="GO" id="GO:0005886">
    <property type="term" value="C:plasma membrane"/>
    <property type="evidence" value="ECO:0000250"/>
    <property type="project" value="UniProtKB"/>
</dbReference>
<dbReference type="GO" id="GO:0019957">
    <property type="term" value="F:C-C chemokine binding"/>
    <property type="evidence" value="ECO:0007669"/>
    <property type="project" value="TreeGrafter"/>
</dbReference>
<dbReference type="GO" id="GO:0016493">
    <property type="term" value="F:C-C chemokine receptor activity"/>
    <property type="evidence" value="ECO:0007669"/>
    <property type="project" value="TreeGrafter"/>
</dbReference>
<dbReference type="GO" id="GO:0019958">
    <property type="term" value="F:C-X-C chemokine binding"/>
    <property type="evidence" value="ECO:0000250"/>
    <property type="project" value="UniProtKB"/>
</dbReference>
<dbReference type="GO" id="GO:0016494">
    <property type="term" value="F:C-X-C chemokine receptor activity"/>
    <property type="evidence" value="ECO:0007669"/>
    <property type="project" value="InterPro"/>
</dbReference>
<dbReference type="GO" id="GO:0038023">
    <property type="term" value="F:signaling receptor activity"/>
    <property type="evidence" value="ECO:0000250"/>
    <property type="project" value="UniProtKB"/>
</dbReference>
<dbReference type="GO" id="GO:0001525">
    <property type="term" value="P:angiogenesis"/>
    <property type="evidence" value="ECO:0007669"/>
    <property type="project" value="UniProtKB-KW"/>
</dbReference>
<dbReference type="GO" id="GO:0019722">
    <property type="term" value="P:calcium-mediated signaling"/>
    <property type="evidence" value="ECO:0007669"/>
    <property type="project" value="TreeGrafter"/>
</dbReference>
<dbReference type="GO" id="GO:0060326">
    <property type="term" value="P:cell chemotaxis"/>
    <property type="evidence" value="ECO:0007669"/>
    <property type="project" value="TreeGrafter"/>
</dbReference>
<dbReference type="GO" id="GO:0007186">
    <property type="term" value="P:G protein-coupled receptor signaling pathway"/>
    <property type="evidence" value="ECO:0000250"/>
    <property type="project" value="UniProtKB"/>
</dbReference>
<dbReference type="GO" id="GO:0006955">
    <property type="term" value="P:immune response"/>
    <property type="evidence" value="ECO:0007669"/>
    <property type="project" value="TreeGrafter"/>
</dbReference>
<dbReference type="GO" id="GO:0006954">
    <property type="term" value="P:inflammatory response"/>
    <property type="evidence" value="ECO:0007669"/>
    <property type="project" value="InterPro"/>
</dbReference>
<dbReference type="GO" id="GO:1900118">
    <property type="term" value="P:negative regulation of execution phase of apoptosis"/>
    <property type="evidence" value="ECO:0000250"/>
    <property type="project" value="UniProtKB"/>
</dbReference>
<dbReference type="GO" id="GO:0045766">
    <property type="term" value="P:positive regulation of angiogenesis"/>
    <property type="evidence" value="ECO:0000250"/>
    <property type="project" value="UniProtKB"/>
</dbReference>
<dbReference type="GO" id="GO:0008284">
    <property type="term" value="P:positive regulation of cell population proliferation"/>
    <property type="evidence" value="ECO:0000250"/>
    <property type="project" value="UniProtKB"/>
</dbReference>
<dbReference type="GO" id="GO:0050921">
    <property type="term" value="P:positive regulation of chemotaxis"/>
    <property type="evidence" value="ECO:0000250"/>
    <property type="project" value="UniProtKB"/>
</dbReference>
<dbReference type="GO" id="GO:0007204">
    <property type="term" value="P:positive regulation of cytosolic calcium ion concentration"/>
    <property type="evidence" value="ECO:0007669"/>
    <property type="project" value="TreeGrafter"/>
</dbReference>
<dbReference type="GO" id="GO:0051281">
    <property type="term" value="P:positive regulation of release of sequestered calcium ion into cytosol"/>
    <property type="evidence" value="ECO:0000250"/>
    <property type="project" value="UniProtKB"/>
</dbReference>
<dbReference type="GO" id="GO:0002685">
    <property type="term" value="P:regulation of leukocyte migration"/>
    <property type="evidence" value="ECO:0007669"/>
    <property type="project" value="InterPro"/>
</dbReference>
<dbReference type="CDD" id="cd15180">
    <property type="entry name" value="7tmA_CXCR3"/>
    <property type="match status" value="1"/>
</dbReference>
<dbReference type="FunFam" id="1.20.1070.10:FF:000159">
    <property type="entry name" value="C-X-C chemokine receptor type 3"/>
    <property type="match status" value="1"/>
</dbReference>
<dbReference type="Gene3D" id="1.20.1070.10">
    <property type="entry name" value="Rhodopsin 7-helix transmembrane proteins"/>
    <property type="match status" value="1"/>
</dbReference>
<dbReference type="InterPro" id="IPR050119">
    <property type="entry name" value="CCR1-9-like"/>
</dbReference>
<dbReference type="InterPro" id="IPR004070">
    <property type="entry name" value="Chemokine_CXCR3"/>
</dbReference>
<dbReference type="InterPro" id="IPR000355">
    <property type="entry name" value="Chemokine_rcpt"/>
</dbReference>
<dbReference type="InterPro" id="IPR000276">
    <property type="entry name" value="GPCR_Rhodpsn"/>
</dbReference>
<dbReference type="InterPro" id="IPR017452">
    <property type="entry name" value="GPCR_Rhodpsn_7TM"/>
</dbReference>
<dbReference type="PANTHER" id="PTHR10489:SF671">
    <property type="entry name" value="C-X-C CHEMOKINE RECEPTOR TYPE 3"/>
    <property type="match status" value="1"/>
</dbReference>
<dbReference type="PANTHER" id="PTHR10489">
    <property type="entry name" value="CELL ADHESION MOLECULE"/>
    <property type="match status" value="1"/>
</dbReference>
<dbReference type="Pfam" id="PF00001">
    <property type="entry name" value="7tm_1"/>
    <property type="match status" value="1"/>
</dbReference>
<dbReference type="PRINTS" id="PR00657">
    <property type="entry name" value="CCCHEMOKINER"/>
</dbReference>
<dbReference type="PRINTS" id="PR01532">
    <property type="entry name" value="CXCCHMKINER3"/>
</dbReference>
<dbReference type="PRINTS" id="PR00237">
    <property type="entry name" value="GPCRRHODOPSN"/>
</dbReference>
<dbReference type="SUPFAM" id="SSF81321">
    <property type="entry name" value="Family A G protein-coupled receptor-like"/>
    <property type="match status" value="1"/>
</dbReference>
<dbReference type="PROSITE" id="PS00237">
    <property type="entry name" value="G_PROTEIN_RECEP_F1_1"/>
    <property type="match status" value="1"/>
</dbReference>
<dbReference type="PROSITE" id="PS50262">
    <property type="entry name" value="G_PROTEIN_RECEP_F1_2"/>
    <property type="match status" value="1"/>
</dbReference>
<keyword id="KW-0037">Angiogenesis</keyword>
<keyword id="KW-1003">Cell membrane</keyword>
<keyword id="KW-0145">Chemotaxis</keyword>
<keyword id="KW-1015">Disulfide bond</keyword>
<keyword id="KW-0297">G-protein coupled receptor</keyword>
<keyword id="KW-0325">Glycoprotein</keyword>
<keyword id="KW-0472">Membrane</keyword>
<keyword id="KW-0675">Receptor</keyword>
<keyword id="KW-1185">Reference proteome</keyword>
<keyword id="KW-0765">Sulfation</keyword>
<keyword id="KW-0807">Transducer</keyword>
<keyword id="KW-0812">Transmembrane</keyword>
<keyword id="KW-1133">Transmembrane helix</keyword>
<accession>Q867B2</accession>